<reference key="1">
    <citation type="journal article" date="2005" name="J. Gen. Virol.">
        <title>A novel class of herpesvirus with bivalve hosts.</title>
        <authorList>
            <person name="Davison A.J."/>
            <person name="Trus B.L."/>
            <person name="Cheng N."/>
            <person name="Steven A.C."/>
            <person name="Watson M.S."/>
            <person name="Cunningham C."/>
            <person name="Le Deuff R.M."/>
            <person name="Renault T."/>
        </authorList>
    </citation>
    <scope>NUCLEOTIDE SEQUENCE [LARGE SCALE GENOMIC DNA]</scope>
</reference>
<evidence type="ECO:0000255" key="1"/>
<evidence type="ECO:0000305" key="2"/>
<feature type="signal peptide" evidence="1">
    <location>
        <begin position="1"/>
        <end position="17"/>
    </location>
</feature>
<feature type="chain" id="PRO_0000385085" description="Uncharacterized protein ORF59">
    <location>
        <begin position="18"/>
        <end position="1080"/>
    </location>
</feature>
<feature type="topological domain" description="Extracellular" evidence="1">
    <location>
        <begin position="18"/>
        <end position="1042"/>
    </location>
</feature>
<feature type="transmembrane region" description="Helical" evidence="1">
    <location>
        <begin position="1043"/>
        <end position="1063"/>
    </location>
</feature>
<feature type="topological domain" description="Cytoplasmic" evidence="1">
    <location>
        <begin position="1064"/>
        <end position="1080"/>
    </location>
</feature>
<feature type="glycosylation site" description="N-linked (GlcNAc...) asparagine; by host" evidence="1">
    <location>
        <position position="439"/>
    </location>
</feature>
<feature type="glycosylation site" description="N-linked (GlcNAc...) asparagine; by host" evidence="1">
    <location>
        <position position="664"/>
    </location>
</feature>
<feature type="glycosylation site" description="N-linked (GlcNAc...) asparagine; by host" evidence="1">
    <location>
        <position position="875"/>
    </location>
</feature>
<protein>
    <recommendedName>
        <fullName>Uncharacterized protein ORF59</fullName>
    </recommendedName>
</protein>
<sequence>MHKLLVIIAHIIVCAYADFTGFDNEAGAVENNNDNNINLEYKPPTLRHGAGISCVIRPGDFTHVAISNDFFNRANLPAGFVNVNLEVTDFASSARCKAQLESLAPDDTLTTLITGAANCEIDQGGVTMVVYLKKNPEEIYLKNWRCGYKGSGDYVYKTLALQKTIKGQWGDSTDADSPIHPPLITLAARVETSTETEITLTCQRNNRGVTTTYFTGAPFKTVEFTGAENFRAKGDLYGRDLTPSVVPQCVINTPGDPVFKFKNLGPEDYSSKCYSGFLSTTLPEIKPKFTLLRNPYDVDFNGYEPNDVTMDFDTDSLFLFDRNVNMDRVVIDKHPYMVMKFLKPRNFHETPLLNHVDPNQPKHTFMTSISFTMLNLLLGQQLHKATAIQTVEVIKNSGDSASITCPFDSSVEEYLAIFLLDTSTCSVSLSNRNDVVQYNNSCVDPTNFYLLSSRSTSNDQTFTIDLTGNEACISKYATCIYKKKVPGITNILLLPADFASRDKIPDLSDKDVEDTDNCEEDPGLIKTLERGIRLLTFSDSYSYDYHLDQYNVLTGDGCAQLINPCEYDTTASAMKELGRVASVRVPIRFLNKFPDKKIWQCSMYDTDSDKMSWNEMRDNVACSGTELYKSLITPPKPSVYRSDENNFKISCGIIHRSCINKGINTSAVLSGTEIEDTLLEEGEEFTISQYDLLIKNKVLKCETEWGVGESFISDLLPTNSGCSVSGSCVFIDMNTIRCFYDSKNCYSHNINNVKVVFRINDADVPGANVKLSETNRFEDGFFHFLYPVASIVSIPTKNTIGFKLVDEWQRETDEFTVPYPTVEQWAFILESGIECDYTELSSAVLDVSMGRYTGETTITLQYDMYNFPECKTNENETSVDYYLQIRGEIGTSRARREDEDKSMTEWKNLVYISVHDDGDGVVTWQPISNQRDYNLDIFDNKILAAFRYRLTQEKITELFGPYINSLEVRVITESLDKGVYEATKEYLDQTMAYRTLMIPRIPPQPPITTATTQPPIDVMITTQSPNKPTEDEKSLDLEMIGKIILLIAFVIVFVILLTIGIITLVKRHRETLPEDEYLLP</sequence>
<organism>
    <name type="scientific">Ostreid herpesvirus 1 (isolate France)</name>
    <name type="common">OsHV-1</name>
    <name type="synonym">Pacific oyster herpesvirus</name>
    <dbReference type="NCBI Taxonomy" id="654903"/>
    <lineage>
        <taxon>Viruses</taxon>
        <taxon>Duplodnaviria</taxon>
        <taxon>Heunggongvirae</taxon>
        <taxon>Peploviricota</taxon>
        <taxon>Herviviricetes</taxon>
        <taxon>Herpesvirales</taxon>
        <taxon>Malacoherpesviridae</taxon>
        <taxon>Ostreavirus</taxon>
        <taxon>Ostreavirus ostreidmalaco1</taxon>
        <taxon>Ostreid herpesvirus 1</taxon>
    </lineage>
</organism>
<comment type="subcellular location">
    <subcellularLocation>
        <location evidence="2">Host membrane</location>
        <topology evidence="2">Single-pass type I membrane protein</topology>
    </subcellularLocation>
</comment>
<keyword id="KW-0325">Glycoprotein</keyword>
<keyword id="KW-1043">Host membrane</keyword>
<keyword id="KW-0472">Membrane</keyword>
<keyword id="KW-1185">Reference proteome</keyword>
<keyword id="KW-0732">Signal</keyword>
<keyword id="KW-0812">Transmembrane</keyword>
<keyword id="KW-1133">Transmembrane helix</keyword>
<gene>
    <name type="ORF">ORF59</name>
</gene>
<accession>Q6R7G6</accession>
<proteinExistence type="inferred from homology"/>
<organismHost>
    <name type="scientific">Magallana gigas</name>
    <name type="common">Pacific oyster</name>
    <name type="synonym">Crassostrea gigas</name>
    <dbReference type="NCBI Taxonomy" id="29159"/>
</organismHost>
<organismHost>
    <name type="scientific">Pecten maximus</name>
    <name type="common">King scallop</name>
    <name type="synonym">Pilgrim's clam</name>
    <dbReference type="NCBI Taxonomy" id="6579"/>
</organismHost>
<name>Y059_OSHVF</name>
<dbReference type="EMBL" id="AY509253">
    <property type="protein sequence ID" value="AAS00949.1"/>
    <property type="molecule type" value="Genomic_DNA"/>
</dbReference>
<dbReference type="RefSeq" id="YP_024602.1">
    <property type="nucleotide sequence ID" value="NC_005881.2"/>
</dbReference>
<dbReference type="SMR" id="Q6R7G6"/>
<dbReference type="KEGG" id="vg:2948166"/>
<dbReference type="Proteomes" id="UP000007021">
    <property type="component" value="Segment"/>
</dbReference>
<dbReference type="GO" id="GO:0033644">
    <property type="term" value="C:host cell membrane"/>
    <property type="evidence" value="ECO:0007669"/>
    <property type="project" value="UniProtKB-SubCell"/>
</dbReference>
<dbReference type="GO" id="GO:0016020">
    <property type="term" value="C:membrane"/>
    <property type="evidence" value="ECO:0007669"/>
    <property type="project" value="UniProtKB-KW"/>
</dbReference>